<gene>
    <name type="ordered locus">Synpcc7942_0865</name>
</gene>
<name>Y865_SYNE7</name>
<keyword id="KW-0547">Nucleotide-binding</keyword>
<keyword id="KW-1185">Reference proteome</keyword>
<feature type="chain" id="PRO_0000261982" description="Nucleotide-binding protein Synpcc7942_0865">
    <location>
        <begin position="1"/>
        <end position="163"/>
    </location>
</feature>
<reference key="1">
    <citation type="submission" date="2005-08" db="EMBL/GenBank/DDBJ databases">
        <title>Complete sequence of chromosome 1 of Synechococcus elongatus PCC 7942.</title>
        <authorList>
            <consortium name="US DOE Joint Genome Institute"/>
            <person name="Copeland A."/>
            <person name="Lucas S."/>
            <person name="Lapidus A."/>
            <person name="Barry K."/>
            <person name="Detter J.C."/>
            <person name="Glavina T."/>
            <person name="Hammon N."/>
            <person name="Israni S."/>
            <person name="Pitluck S."/>
            <person name="Schmutz J."/>
            <person name="Larimer F."/>
            <person name="Land M."/>
            <person name="Kyrpides N."/>
            <person name="Lykidis A."/>
            <person name="Golden S."/>
            <person name="Richardson P."/>
        </authorList>
    </citation>
    <scope>NUCLEOTIDE SEQUENCE [LARGE SCALE GENOMIC DNA]</scope>
    <source>
        <strain>ATCC 33912 / PCC 7942 / FACHB-805</strain>
    </source>
</reference>
<comment type="function">
    <text evidence="1">Nucleotide-binding protein.</text>
</comment>
<comment type="similarity">
    <text evidence="1">Belongs to the YajQ family.</text>
</comment>
<evidence type="ECO:0000255" key="1">
    <source>
        <dbReference type="HAMAP-Rule" id="MF_00632"/>
    </source>
</evidence>
<organism>
    <name type="scientific">Synechococcus elongatus (strain ATCC 33912 / PCC 7942 / FACHB-805)</name>
    <name type="common">Anacystis nidulans R2</name>
    <dbReference type="NCBI Taxonomy" id="1140"/>
    <lineage>
        <taxon>Bacteria</taxon>
        <taxon>Bacillati</taxon>
        <taxon>Cyanobacteriota</taxon>
        <taxon>Cyanophyceae</taxon>
        <taxon>Synechococcales</taxon>
        <taxon>Synechococcaceae</taxon>
        <taxon>Synechococcus</taxon>
    </lineage>
</organism>
<accession>Q31PX4</accession>
<protein>
    <recommendedName>
        <fullName evidence="1">Nucleotide-binding protein Synpcc7942_0865</fullName>
    </recommendedName>
</protein>
<sequence length="163" mass="18303">MATASSFDVVSDFDQQELVNAVDQARREITNRYDLKDSATTLELTAETLTINTDSEFSLDAVVTLLQTKVAKRNLSLKIFDFGKVETASGNRVRQVITLQRGLSSELAKDLSKQIRDQFKKVQVSIQGDALRVSAKSKDDLQTVIQYLKQQDVPAPLQFTNYR</sequence>
<dbReference type="EMBL" id="CP000100">
    <property type="protein sequence ID" value="ABB56895.1"/>
    <property type="molecule type" value="Genomic_DNA"/>
</dbReference>
<dbReference type="RefSeq" id="WP_011242987.1">
    <property type="nucleotide sequence ID" value="NZ_JACJTX010000005.1"/>
</dbReference>
<dbReference type="SMR" id="Q31PX4"/>
<dbReference type="STRING" id="1140.Synpcc7942_0865"/>
<dbReference type="PaxDb" id="1140-Synpcc7942_0865"/>
<dbReference type="KEGG" id="syf:Synpcc7942_0865"/>
<dbReference type="eggNOG" id="COG1666">
    <property type="taxonomic scope" value="Bacteria"/>
</dbReference>
<dbReference type="HOGENOM" id="CLU_099839_0_0_3"/>
<dbReference type="OrthoDB" id="9801447at2"/>
<dbReference type="BioCyc" id="SYNEL:SYNPCC7942_0865-MONOMER"/>
<dbReference type="Proteomes" id="UP000889800">
    <property type="component" value="Chromosome"/>
</dbReference>
<dbReference type="GO" id="GO:0005829">
    <property type="term" value="C:cytosol"/>
    <property type="evidence" value="ECO:0007669"/>
    <property type="project" value="TreeGrafter"/>
</dbReference>
<dbReference type="GO" id="GO:0000166">
    <property type="term" value="F:nucleotide binding"/>
    <property type="evidence" value="ECO:0007669"/>
    <property type="project" value="TreeGrafter"/>
</dbReference>
<dbReference type="CDD" id="cd11740">
    <property type="entry name" value="YajQ_like"/>
    <property type="match status" value="1"/>
</dbReference>
<dbReference type="Gene3D" id="3.30.70.860">
    <property type="match status" value="1"/>
</dbReference>
<dbReference type="Gene3D" id="3.30.70.990">
    <property type="entry name" value="YajQ-like, domain 2"/>
    <property type="match status" value="1"/>
</dbReference>
<dbReference type="HAMAP" id="MF_00632">
    <property type="entry name" value="YajQ"/>
    <property type="match status" value="1"/>
</dbReference>
<dbReference type="InterPro" id="IPR007551">
    <property type="entry name" value="DUF520"/>
</dbReference>
<dbReference type="InterPro" id="IPR035571">
    <property type="entry name" value="UPF0234-like_C"/>
</dbReference>
<dbReference type="InterPro" id="IPR035570">
    <property type="entry name" value="UPF0234_N"/>
</dbReference>
<dbReference type="InterPro" id="IPR036183">
    <property type="entry name" value="YajQ-like_sf"/>
</dbReference>
<dbReference type="NCBIfam" id="NF003819">
    <property type="entry name" value="PRK05412.1"/>
    <property type="match status" value="1"/>
</dbReference>
<dbReference type="PANTHER" id="PTHR30476">
    <property type="entry name" value="UPF0234 PROTEIN YAJQ"/>
    <property type="match status" value="1"/>
</dbReference>
<dbReference type="PANTHER" id="PTHR30476:SF0">
    <property type="entry name" value="UPF0234 PROTEIN YAJQ"/>
    <property type="match status" value="1"/>
</dbReference>
<dbReference type="Pfam" id="PF04461">
    <property type="entry name" value="DUF520"/>
    <property type="match status" value="1"/>
</dbReference>
<dbReference type="SUPFAM" id="SSF89963">
    <property type="entry name" value="YajQ-like"/>
    <property type="match status" value="2"/>
</dbReference>
<proteinExistence type="inferred from homology"/>